<name>Y3284_MYCTU</name>
<gene>
    <name type="ordered locus">Rv3284</name>
    <name type="ORF">MTCY71.24</name>
</gene>
<reference key="1">
    <citation type="journal article" date="1998" name="Nature">
        <title>Deciphering the biology of Mycobacterium tuberculosis from the complete genome sequence.</title>
        <authorList>
            <person name="Cole S.T."/>
            <person name="Brosch R."/>
            <person name="Parkhill J."/>
            <person name="Garnier T."/>
            <person name="Churcher C.M."/>
            <person name="Harris D.E."/>
            <person name="Gordon S.V."/>
            <person name="Eiglmeier K."/>
            <person name="Gas S."/>
            <person name="Barry C.E. III"/>
            <person name="Tekaia F."/>
            <person name="Badcock K."/>
            <person name="Basham D."/>
            <person name="Brown D."/>
            <person name="Chillingworth T."/>
            <person name="Connor R."/>
            <person name="Davies R.M."/>
            <person name="Devlin K."/>
            <person name="Feltwell T."/>
            <person name="Gentles S."/>
            <person name="Hamlin N."/>
            <person name="Holroyd S."/>
            <person name="Hornsby T."/>
            <person name="Jagels K."/>
            <person name="Krogh A."/>
            <person name="McLean J."/>
            <person name="Moule S."/>
            <person name="Murphy L.D."/>
            <person name="Oliver S."/>
            <person name="Osborne J."/>
            <person name="Quail M.A."/>
            <person name="Rajandream M.A."/>
            <person name="Rogers J."/>
            <person name="Rutter S."/>
            <person name="Seeger K."/>
            <person name="Skelton S."/>
            <person name="Squares S."/>
            <person name="Squares R."/>
            <person name="Sulston J.E."/>
            <person name="Taylor K."/>
            <person name="Whitehead S."/>
            <person name="Barrell B.G."/>
        </authorList>
    </citation>
    <scope>NUCLEOTIDE SEQUENCE [LARGE SCALE GENOMIC DNA]</scope>
    <source>
        <strain>ATCC 25618 / H37Rv</strain>
    </source>
</reference>
<reference key="2">
    <citation type="journal article" date="2008" name="BMC Syst. Biol.">
        <title>targetTB: a target identification pipeline for Mycobacterium tuberculosis through an interactome, reactome and genome-scale structural analysis.</title>
        <authorList>
            <person name="Raman K."/>
            <person name="Yeturu K."/>
            <person name="Chandra N."/>
        </authorList>
    </citation>
    <scope>IDENTIFICATION AS A DRUG TARGET [LARGE SCALE ANALYSIS]</scope>
</reference>
<reference key="3">
    <citation type="journal article" date="2011" name="Mol. Cell. Proteomics">
        <title>Proteogenomic analysis of Mycobacterium tuberculosis by high resolution mass spectrometry.</title>
        <authorList>
            <person name="Kelkar D.S."/>
            <person name="Kumar D."/>
            <person name="Kumar P."/>
            <person name="Balakrishnan L."/>
            <person name="Muthusamy B."/>
            <person name="Yadav A.K."/>
            <person name="Shrivastava P."/>
            <person name="Marimuthu A."/>
            <person name="Anand S."/>
            <person name="Sundaram H."/>
            <person name="Kingsbury R."/>
            <person name="Harsha H.C."/>
            <person name="Nair B."/>
            <person name="Prasad T.S."/>
            <person name="Chauhan D.S."/>
            <person name="Katoch K."/>
            <person name="Katoch V.M."/>
            <person name="Kumar P."/>
            <person name="Chaerkady R."/>
            <person name="Ramachandran S."/>
            <person name="Dash D."/>
            <person name="Pandey A."/>
        </authorList>
    </citation>
    <scope>ACETYLATION [LARGE SCALE ANALYSIS] AT THR-2</scope>
    <scope>CLEAVAGE OF INITIATOR METHIONINE [LARGE SCALE ANALYSIS]</scope>
    <scope>IDENTIFICATION BY MASS SPECTROMETRY [LARGE SCALE ANALYSIS]</scope>
    <source>
        <strain>ATCC 25618 / H37Rv</strain>
    </source>
</reference>
<comment type="miscellaneous">
    <text>Was identified as a high-confidence drug target.</text>
</comment>
<comment type="similarity">
    <text evidence="1">Belongs to the SufE family.</text>
</comment>
<evidence type="ECO:0000305" key="1"/>
<evidence type="ECO:0007744" key="2">
    <source>
    </source>
</evidence>
<keyword id="KW-0007">Acetylation</keyword>
<keyword id="KW-1185">Reference proteome</keyword>
<dbReference type="EMBL" id="AL123456">
    <property type="protein sequence ID" value="CCP46103.1"/>
    <property type="molecule type" value="Genomic_DNA"/>
</dbReference>
<dbReference type="PIR" id="E70980">
    <property type="entry name" value="E70980"/>
</dbReference>
<dbReference type="RefSeq" id="NP_217801.1">
    <property type="nucleotide sequence ID" value="NC_000962.3"/>
</dbReference>
<dbReference type="RefSeq" id="WP_003417152.1">
    <property type="nucleotide sequence ID" value="NZ_NVQJ01000003.1"/>
</dbReference>
<dbReference type="SMR" id="P9WGC3"/>
<dbReference type="STRING" id="83332.Rv3284"/>
<dbReference type="iPTMnet" id="P9WGC3"/>
<dbReference type="PaxDb" id="83332-Rv3284"/>
<dbReference type="GeneID" id="887966"/>
<dbReference type="KEGG" id="mtu:Rv3284"/>
<dbReference type="KEGG" id="mtv:RVBD_3284"/>
<dbReference type="TubercuList" id="Rv3284"/>
<dbReference type="eggNOG" id="COG2166">
    <property type="taxonomic scope" value="Bacteria"/>
</dbReference>
<dbReference type="InParanoid" id="P9WGC3"/>
<dbReference type="OrthoDB" id="9806335at2"/>
<dbReference type="PhylomeDB" id="P9WGC3"/>
<dbReference type="Proteomes" id="UP000001584">
    <property type="component" value="Chromosome"/>
</dbReference>
<dbReference type="Gene3D" id="3.90.1010.10">
    <property type="match status" value="1"/>
</dbReference>
<dbReference type="InterPro" id="IPR003808">
    <property type="entry name" value="Fe-S_metab-assoc_dom"/>
</dbReference>
<dbReference type="PANTHER" id="PTHR43597:SF5">
    <property type="entry name" value="SUFE-LIKE PROTEIN 2, CHLOROPLASTIC"/>
    <property type="match status" value="1"/>
</dbReference>
<dbReference type="PANTHER" id="PTHR43597">
    <property type="entry name" value="SULFUR ACCEPTOR PROTEIN CSDE"/>
    <property type="match status" value="1"/>
</dbReference>
<dbReference type="Pfam" id="PF02657">
    <property type="entry name" value="SufE"/>
    <property type="match status" value="1"/>
</dbReference>
<dbReference type="SUPFAM" id="SSF82649">
    <property type="entry name" value="SufE/NifU"/>
    <property type="match status" value="1"/>
</dbReference>
<sequence>MTAPASLPAPLAEVVSDFAEVQGQDKLRLLLEFANELPALPSHLAESAMEPVPECQSPLFLHVDASDPNRVRLHFSAPAEAPTTRGFASILAAGLDEQPAADILAVPEDFYTELGLAALISPLRLRGMSAMLARIKRRLREAD</sequence>
<proteinExistence type="evidence at protein level"/>
<feature type="initiator methionine" description="Removed" evidence="2">
    <location>
        <position position="1"/>
    </location>
</feature>
<feature type="chain" id="PRO_0000202140" description="Uncharacterized SufE-like protein Rv3284">
    <location>
        <begin position="2"/>
        <end position="143"/>
    </location>
</feature>
<feature type="modified residue" description="N-acetylthreonine" evidence="2">
    <location>
        <position position="2"/>
    </location>
</feature>
<accession>P9WGC3</accession>
<accession>L0TCC5</accession>
<accession>P67123</accession>
<accession>P96889</accession>
<organism>
    <name type="scientific">Mycobacterium tuberculosis (strain ATCC 25618 / H37Rv)</name>
    <dbReference type="NCBI Taxonomy" id="83332"/>
    <lineage>
        <taxon>Bacteria</taxon>
        <taxon>Bacillati</taxon>
        <taxon>Actinomycetota</taxon>
        <taxon>Actinomycetes</taxon>
        <taxon>Mycobacteriales</taxon>
        <taxon>Mycobacteriaceae</taxon>
        <taxon>Mycobacterium</taxon>
        <taxon>Mycobacterium tuberculosis complex</taxon>
    </lineage>
</organism>
<protein>
    <recommendedName>
        <fullName>Uncharacterized SufE-like protein Rv3284</fullName>
    </recommendedName>
</protein>